<evidence type="ECO:0000250" key="1"/>
<evidence type="ECO:0000305" key="2"/>
<accession>Q9GJR3</accession>
<dbReference type="EMBL" id="AF119235">
    <property type="protein sequence ID" value="AAG42159.1"/>
    <property type="molecule type" value="Genomic_DNA"/>
</dbReference>
<dbReference type="EMBL" id="AF294851">
    <property type="protein sequence ID" value="AAM68934.1"/>
    <property type="molecule type" value="Genomic_DNA"/>
</dbReference>
<dbReference type="EMBL" id="AF294852">
    <property type="protein sequence ID" value="AAM68935.1"/>
    <property type="molecule type" value="Genomic_DNA"/>
</dbReference>
<dbReference type="GO" id="GO:0000786">
    <property type="term" value="C:nucleosome"/>
    <property type="evidence" value="ECO:0007669"/>
    <property type="project" value="UniProtKB-KW"/>
</dbReference>
<dbReference type="GO" id="GO:0005634">
    <property type="term" value="C:nucleus"/>
    <property type="evidence" value="ECO:0007669"/>
    <property type="project" value="UniProtKB-SubCell"/>
</dbReference>
<dbReference type="GO" id="GO:0003677">
    <property type="term" value="F:DNA binding"/>
    <property type="evidence" value="ECO:0007669"/>
    <property type="project" value="UniProtKB-KW"/>
</dbReference>
<dbReference type="GO" id="GO:0030261">
    <property type="term" value="P:chromosome condensation"/>
    <property type="evidence" value="ECO:0007669"/>
    <property type="project" value="UniProtKB-KW"/>
</dbReference>
<dbReference type="GO" id="GO:0035092">
    <property type="term" value="P:sperm DNA condensation"/>
    <property type="evidence" value="ECO:0007669"/>
    <property type="project" value="InterPro"/>
</dbReference>
<dbReference type="InterPro" id="IPR000221">
    <property type="entry name" value="Protamine_P1"/>
</dbReference>
<dbReference type="Pfam" id="PF00260">
    <property type="entry name" value="Protamine_P1"/>
    <property type="match status" value="1"/>
</dbReference>
<dbReference type="PROSITE" id="PS00048">
    <property type="entry name" value="PROTAMINE_P1"/>
    <property type="match status" value="1"/>
</dbReference>
<gene>
    <name type="primary">PRM1</name>
</gene>
<comment type="function">
    <text evidence="1">Protamines substitute for histones in the chromatin of sperm during the haploid phase of spermatogenesis. They compact sperm DNA into a highly condensed, stable and inactive complex (By similarity).</text>
</comment>
<comment type="subcellular location">
    <subcellularLocation>
        <location evidence="1">Nucleus</location>
    </subcellularLocation>
    <subcellularLocation>
        <location evidence="1">Chromosome</location>
    </subcellularLocation>
</comment>
<comment type="tissue specificity">
    <text>Testis.</text>
</comment>
<comment type="similarity">
    <text evidence="2">Belongs to the protamine P1 family.</text>
</comment>
<reference key="1">
    <citation type="submission" date="1998-10" db="EMBL/GenBank/DDBJ databases">
        <title>Positive Darwinian selection on the lineage leading to humans.</title>
        <authorList>
            <person name="Karanth P.K."/>
            <person name="Stewart C.-B."/>
            <person name="Holt R.A."/>
            <person name="de Koning J."/>
            <person name="Messier W."/>
        </authorList>
    </citation>
    <scope>NUCLEOTIDE SEQUENCE [GENOMIC DNA]</scope>
</reference>
<reference key="2">
    <citation type="submission" date="2000-08" db="EMBL/GenBank/DDBJ databases">
        <title>Molecular systematics of the langurs.</title>
        <authorList>
            <person name="Karanth P.K."/>
            <person name="Singh L."/>
            <person name="Stewart C.-B."/>
        </authorList>
    </citation>
    <scope>NUCLEOTIDE SEQUENCE [GENOMIC DNA]</scope>
    <source>
        <strain>Isolate A2</strain>
        <strain>Isolate A2b</strain>
    </source>
</reference>
<protein>
    <recommendedName>
        <fullName>Sperm protamine P1</fullName>
    </recommendedName>
</protein>
<feature type="chain" id="PRO_0000191555" description="Sperm protamine P1">
    <location>
        <begin position="1"/>
        <end position="50"/>
    </location>
</feature>
<name>HSP1_SEMEN</name>
<sequence>MARYRRCRSQSRSRCCRPRRRCRRRRRSCRARRRATRCCRRRYRLRCRRY</sequence>
<keyword id="KW-0158">Chromosome</keyword>
<keyword id="KW-0217">Developmental protein</keyword>
<keyword id="KW-0221">Differentiation</keyword>
<keyword id="KW-0226">DNA condensation</keyword>
<keyword id="KW-0238">DNA-binding</keyword>
<keyword id="KW-0544">Nucleosome core</keyword>
<keyword id="KW-0539">Nucleus</keyword>
<keyword id="KW-0744">Spermatogenesis</keyword>
<proteinExistence type="evidence at transcript level"/>
<organism>
    <name type="scientific">Semnopithecus entellus</name>
    <name type="common">Northern plains gray langur</name>
    <name type="synonym">Presbytis entellus</name>
    <dbReference type="NCBI Taxonomy" id="88029"/>
    <lineage>
        <taxon>Eukaryota</taxon>
        <taxon>Metazoa</taxon>
        <taxon>Chordata</taxon>
        <taxon>Craniata</taxon>
        <taxon>Vertebrata</taxon>
        <taxon>Euteleostomi</taxon>
        <taxon>Mammalia</taxon>
        <taxon>Eutheria</taxon>
        <taxon>Euarchontoglires</taxon>
        <taxon>Primates</taxon>
        <taxon>Haplorrhini</taxon>
        <taxon>Catarrhini</taxon>
        <taxon>Cercopithecidae</taxon>
        <taxon>Colobinae</taxon>
        <taxon>Semnopithecus</taxon>
    </lineage>
</organism>